<proteinExistence type="inferred from homology"/>
<comment type="function">
    <text evidence="3 4 5 6 7 8 9 10 11 12 13 14 18 19">Probable inactive dehydrogenase; part of the gene cluster that mediates the biosynthesis of fungal ergot alkaloid (PubMed:14700635, PubMed:14732265, PubMed:15904941, PubMed:17308187, PubMed:17720822). DmaW catalyzes the first step of ergot alkaloid biosynthesis by condensing dimethylallyl diphosphate (DMAP) and tryptophan to form 4-dimethylallyl-L-tryptophan (PubMed:14732265). The second step is catalyzed by the methyltransferase easF that methylates 4-dimethylallyl-L-tryptophan in the presence of S-adenosyl-L-methionine, resulting in the formation of 4-dimethylallyl-L-abrine (By similarity). The catalase easC and the FAD-dependent oxidoreductase easE then transform 4-dimethylallyl-L-abrine to chanoclavine-I which is further oxidized by easD in the presence of NAD(+), resulting in the formation of chanoclavine-I aldehyde (PubMed:20118373, PubMed:21409592). Agroclavine dehydrogenase easG then mediates the conversion of chanoclavine-I aldehyde to agroclavine via a non-enzymatic adduct reaction: the substrate is an iminium intermediate that is formed spontaneously from chanoclavine-I aldehyde in the presence of glutathione (PubMed:20735127, PubMed:21494745). The presence of easA is not required to complete this reaction (PubMed:21494745). Further conversion of agroclavine to paspalic acid is a two-step process involving oxidation of agroclavine to elymoclavine and of elymoclavine to paspalic acid, the second step being performed by the elymoclavine oxidase cloA (PubMed:16538694, PubMed:17720822). Paspalic acid is then further converted to D-lysergic acid (PubMed:15904941). Ergopeptines are assembled from D-lysergic acid and three different amino acids by the D-lysergyl-peptide-synthetases composed each of a monomudular and a trimodular nonribosomal peptide synthetase subunit (PubMed:14700635, PubMed:15904941). LpsB and lpsC encode the monomodular subunits responsible for D-lysergic acid activation and incorporation into the ergopeptine backbone (PubMed:14700635). LpsA1 and A2 subunits encode the trimodular nonribosomal peptide synthetase assembling the tripeptide portion of ergopeptines (PubMed:14700635). LpsA1 is responsible for formation of the major ergopeptine, ergotamine, and lpsA2 for alpha-ergocryptine, the minor ergopeptine of the total alkaloid mixture elaborated by C.purpurea (PubMed:17560817, PubMed:19139103). D-lysergyl-tripeptides are assembled by the nonribosomal peptide synthetases and released as N-(D-lysergyl-aminoacyl)-lactams (PubMed:24361048). Cyclolization of the D-lysergyl-tripeptides is performed by the Fe(2+)/2-ketoglutarate-dependent dioxygenase easH which introduces a hydroxyl group into N-(D-lysergyl-aminoacyl)-lactam at alpha-C of the aminoacyl residue followed by spontaneous condensation with the terminal lactam carbonyl group (PubMed:24361048).</text>
</comment>
<comment type="similarity">
    <text evidence="17">Belongs to the NADH:flavin oxidoreductase/NADH oxidase family.</text>
</comment>
<comment type="caution">
    <text evidence="17">In contrast to other members of the family, lacks the conserved Tyr active site at position 176 which is replaced by a Phe residue.</text>
</comment>
<comment type="sequence caution" evidence="17">
    <conflict type="frameshift">
        <sequence resource="EMBL-CDS" id="CAG28312"/>
    </conflict>
</comment>
<dbReference type="EMBL" id="AJ703809">
    <property type="protein sequence ID" value="CAG28312.1"/>
    <property type="status" value="ALT_FRAME"/>
    <property type="molecule type" value="Genomic_DNA"/>
</dbReference>
<dbReference type="EMBL" id="HM535793">
    <property type="protein sequence ID" value="ADU03230.1"/>
    <property type="molecule type" value="Genomic_DNA"/>
</dbReference>
<dbReference type="SMR" id="Q6ZXC1"/>
<dbReference type="VEuPathDB" id="FungiDB:CPUR_04084"/>
<dbReference type="GO" id="GO:0010181">
    <property type="term" value="F:FMN binding"/>
    <property type="evidence" value="ECO:0007669"/>
    <property type="project" value="InterPro"/>
</dbReference>
<dbReference type="GO" id="GO:0003959">
    <property type="term" value="F:NADPH dehydrogenase activity"/>
    <property type="evidence" value="ECO:0007669"/>
    <property type="project" value="TreeGrafter"/>
</dbReference>
<dbReference type="CDD" id="cd02933">
    <property type="entry name" value="OYE_like_FMN"/>
    <property type="match status" value="1"/>
</dbReference>
<dbReference type="FunFam" id="3.20.20.70:FF:000138">
    <property type="entry name" value="NADPH dehydrogenase 1"/>
    <property type="match status" value="1"/>
</dbReference>
<dbReference type="Gene3D" id="3.20.20.70">
    <property type="entry name" value="Aldolase class I"/>
    <property type="match status" value="1"/>
</dbReference>
<dbReference type="InterPro" id="IPR013785">
    <property type="entry name" value="Aldolase_TIM"/>
</dbReference>
<dbReference type="InterPro" id="IPR001155">
    <property type="entry name" value="OxRdtase_FMN_N"/>
</dbReference>
<dbReference type="InterPro" id="IPR045247">
    <property type="entry name" value="Oye-like"/>
</dbReference>
<dbReference type="PANTHER" id="PTHR22893">
    <property type="entry name" value="NADH OXIDOREDUCTASE-RELATED"/>
    <property type="match status" value="1"/>
</dbReference>
<dbReference type="PANTHER" id="PTHR22893:SF91">
    <property type="entry name" value="NADPH DEHYDROGENASE 2-RELATED"/>
    <property type="match status" value="1"/>
</dbReference>
<dbReference type="Pfam" id="PF00724">
    <property type="entry name" value="Oxidored_FMN"/>
    <property type="match status" value="1"/>
</dbReference>
<dbReference type="SUPFAM" id="SSF51395">
    <property type="entry name" value="FMN-linked oxidoreductases"/>
    <property type="match status" value="1"/>
</dbReference>
<gene>
    <name evidence="16" type="primary">easA</name>
    <name evidence="15" type="synonym">cpox3</name>
</gene>
<feature type="chain" id="PRO_0000422559" description="Probable inactive dehydrogenase easA">
    <location>
        <begin position="1"/>
        <end position="380"/>
    </location>
</feature>
<feature type="binding site" evidence="2">
    <location>
        <begin position="25"/>
        <end position="27"/>
    </location>
    <ligand>
        <name>FMN</name>
        <dbReference type="ChEBI" id="CHEBI:58210"/>
    </ligand>
</feature>
<feature type="binding site" evidence="2">
    <location>
        <position position="60"/>
    </location>
    <ligand>
        <name>FMN</name>
        <dbReference type="ChEBI" id="CHEBI:58210"/>
    </ligand>
</feature>
<feature type="binding site" evidence="2">
    <location>
        <position position="102"/>
    </location>
    <ligand>
        <name>FMN</name>
        <dbReference type="ChEBI" id="CHEBI:58210"/>
    </ligand>
</feature>
<feature type="binding site" evidence="2">
    <location>
        <position position="171"/>
    </location>
    <ligand>
        <name>FMN</name>
        <dbReference type="ChEBI" id="CHEBI:58210"/>
    </ligand>
</feature>
<feature type="binding site" evidence="1">
    <location>
        <position position="171"/>
    </location>
    <ligand>
        <name>substrate</name>
    </ligand>
</feature>
<feature type="binding site" evidence="1">
    <location>
        <position position="174"/>
    </location>
    <ligand>
        <name>substrate</name>
    </ligand>
</feature>
<feature type="binding site" evidence="2">
    <location>
        <position position="223"/>
    </location>
    <ligand>
        <name>FMN</name>
        <dbReference type="ChEBI" id="CHEBI:58210"/>
    </ligand>
</feature>
<feature type="binding site" evidence="2">
    <location>
        <position position="299"/>
    </location>
    <ligand>
        <name>FMN</name>
        <dbReference type="ChEBI" id="CHEBI:58210"/>
    </ligand>
</feature>
<feature type="binding site" evidence="2">
    <location>
        <begin position="324"/>
        <end position="325"/>
    </location>
    <ligand>
        <name>FMN</name>
        <dbReference type="ChEBI" id="CHEBI:58210"/>
    </ligand>
</feature>
<feature type="binding site" evidence="1">
    <location>
        <position position="325"/>
    </location>
    <ligand>
        <name>FMN</name>
        <dbReference type="ChEBI" id="CHEBI:58210"/>
    </ligand>
</feature>
<feature type="binding site" evidence="1">
    <location>
        <position position="352"/>
    </location>
    <ligand>
        <name>substrate</name>
    </ligand>
</feature>
<feature type="sequence variant" description="In strain: P1 / 1029/N5.">
    <original>R</original>
    <variation>Q</variation>
    <location>
        <position position="81"/>
    </location>
</feature>
<feature type="sequence variant" description="In strain: P1 / 1029/N5.">
    <original>R</original>
    <variation>Q</variation>
    <location>
        <position position="118"/>
    </location>
</feature>
<feature type="sequence variant" description="In strain: P1 / 1029/N5.">
    <original>G</original>
    <variation>E</variation>
    <location>
        <position position="123"/>
    </location>
</feature>
<sequence length="380" mass="42670">MSTSNLFSTVPFGKNVLNHKIVLSPMTRFRADDNGVPLSYMKTFYAQRASVRGTLLVTDAVAICPRTKGFPNVPGIWHKDRIAAWKEVVDEVHSKGSFIWLQLWATGRAADLEALTSRGLKLGSSSEVPVAPGEPTPRALDEDEIQQYILDYVQGAKNAVHGAGFDGVEIHGANGFLIDQFLQSSCNRRTDQWGGSIENRSRFGLEITRGVVDAVGHDRVGMKLSPWSTFQGMGTMDDLVPQFEHFITCLREMDIAYLHLANSRWVEEEDPSIRTHPDFHNQTFVQMWGKKRPILLAGGYDPDSARRLVDQTYSDRNNVLVVFGRHYISNPDLPFRLRMGIALQKYNRDTFYIPCSGEGYVDYPFCKEYLDQADEAAVAG</sequence>
<reference key="1">
    <citation type="journal article" date="2005" name="Phytochemistry">
        <title>The ergot alkaloid gene cluster in Claviceps purpurea: extension of the cluster sequence and intra species evolution.</title>
        <authorList>
            <person name="Haarmann T."/>
            <person name="Machado C."/>
            <person name="Lubbe Y."/>
            <person name="Correia T."/>
            <person name="Schardl C.L."/>
            <person name="Panaccione D.G."/>
            <person name="Tudzynski P."/>
        </authorList>
    </citation>
    <scope>NUCLEOTIDE SEQUENCE [GENOMIC DNA]</scope>
    <scope>FUNCTION</scope>
    <scope>IDENTIFICATION IN THE EAS CLUSTER</scope>
    <source>
        <strain>P1 / 1029/N5</strain>
    </source>
</reference>
<reference key="2">
    <citation type="journal article" date="2010" name="J. Am. Chem. Soc.">
        <title>Controlling a structural branch point in ergot alkaloid biosynthesis.</title>
        <authorList>
            <person name="Cheng J.Z."/>
            <person name="Coyle C.M."/>
            <person name="Panaccione D.G."/>
            <person name="O'Connor S.E."/>
        </authorList>
    </citation>
    <scope>NUCLEOTIDE SEQUENCE [GENOMIC DNA]</scope>
    <scope>FUNCTION</scope>
    <source>
        <strain>ATCC 20102 / Farmitalia FI 32/17</strain>
    </source>
</reference>
<reference key="3">
    <citation type="journal article" date="2001" name="Appl. Microbiol. Biotechnol.">
        <title>Biotechnology and genetics of ergot alkaloids.</title>
        <authorList>
            <person name="Tudzynski P."/>
            <person name="Correia T."/>
            <person name="Keller U."/>
        </authorList>
    </citation>
    <scope>BIOTECHNOLOGY</scope>
    <source>
        <strain>P1 / 1029/N5</strain>
    </source>
</reference>
<reference key="4">
    <citation type="journal article" date="2003" name="Chem. Biol.">
        <title>Molecular cloning and analysis of the ergopeptine assembly system in the ergot fungus Claviceps purpurea.</title>
        <authorList>
            <person name="Correia T."/>
            <person name="Grammel N."/>
            <person name="Ortel I."/>
            <person name="Keller U."/>
            <person name="Tudzynski P."/>
        </authorList>
    </citation>
    <scope>FUNCTION</scope>
</reference>
<reference key="5">
    <citation type="journal article" date="2004" name="Fungal Genet. Biol.">
        <title>The determinant step in ergot alkaloid biosynthesis by an endophyte of perennial ryegrass.</title>
        <authorList>
            <person name="Wang J."/>
            <person name="Machado C."/>
            <person name="Panaccione D.G."/>
            <person name="Tsai H.-F."/>
            <person name="Schardl C.L."/>
        </authorList>
    </citation>
    <scope>FUNCTION</scope>
    <source>
        <strain>ATCC 20102 / Farmitalia FI 32/17</strain>
    </source>
</reference>
<reference key="6">
    <citation type="journal article" date="2006" name="ChemBioChem">
        <title>Identification of the cytochrome P450 monooxygenase that bridges the clavine and ergoline alkaloid pathways.</title>
        <authorList>
            <person name="Haarmann T."/>
            <person name="Ortel I."/>
            <person name="Tudzynski P."/>
            <person name="Keller U."/>
        </authorList>
    </citation>
    <scope>FUNCTION</scope>
    <source>
        <strain>P1 / 1029/N5</strain>
    </source>
</reference>
<reference key="7">
    <citation type="journal article" date="2007" name="Appl. Environ. Microbiol.">
        <title>A complex ergovaline gene cluster in epichloe endophytes of grasses.</title>
        <authorList>
            <person name="Fleetwood D.J."/>
            <person name="Scott B."/>
            <person name="Lane G.A."/>
            <person name="Tanaka A."/>
            <person name="Johnson R.D."/>
        </authorList>
    </citation>
    <scope>FUNCTION</scope>
</reference>
<reference key="8">
    <citation type="journal article" date="2007" name="Appl. Environ. Microbiol.">
        <title>Comparison of ergot alkaloid biosynthesis gene clusters in Claviceps species indicates loss of late pathway steps in evolution of C. fusiformis.</title>
        <authorList>
            <person name="Lorenz N."/>
            <person name="Wilson E.V."/>
            <person name="Machado C."/>
            <person name="Schardl C.L."/>
            <person name="Tudzynski P."/>
        </authorList>
    </citation>
    <scope>FUNCTION</scope>
</reference>
<reference key="9">
    <citation type="journal article" date="2008" name="Fungal Genet. Biol.">
        <title>Use of a nonhomologous end joining deficient strain (Deltaku70) of the ergot fungus Claviceps purpurea for identification of a nonribosomal peptide synthetase gene involved in ergotamine biosynthesis.</title>
        <authorList>
            <person name="Haarmann T."/>
            <person name="Lorenz N."/>
            <person name="Tudzynski P."/>
        </authorList>
    </citation>
    <scope>FUNCTION</scope>
</reference>
<reference key="10">
    <citation type="journal article" date="2009" name="J. Biol. Chem.">
        <title>Combinatorial assembly of simple and complex D-lysergic acid alkaloid peptide classes in the ergot fungus Claviceps purpurea.</title>
        <authorList>
            <person name="Ortel I."/>
            <person name="Keller U."/>
        </authorList>
    </citation>
    <scope>FUNCTION</scope>
</reference>
<reference key="11">
    <citation type="journal article" date="2010" name="Appl. Environ. Microbiol.">
        <title>Alkaloid cluster gene ccsA of the ergot fungus Claviceps purpurea encodes chanoclavine I synthase, a flavin adenine dinucleotide-containing oxidoreductase mediating the transformation of N-methyl-dimethylallyltryptophan to chanoclavine I.</title>
        <authorList>
            <person name="Lorenz N."/>
            <person name="Olsovska J."/>
            <person name="Sulc M."/>
            <person name="Tudzynski P."/>
        </authorList>
    </citation>
    <scope>FUNCTION</scope>
</reference>
<reference key="12">
    <citation type="journal article" date="2011" name="Curr. Genet.">
        <title>Ergot cluster-encoded catalase is required for synthesis of chanoclavine-I in Aspergillus fumigatus.</title>
        <authorList>
            <person name="Goetz K.E."/>
            <person name="Coyle C.M."/>
            <person name="Cheng J.Z."/>
            <person name="O'Connor S.E."/>
            <person name="Panaccione D.G."/>
        </authorList>
    </citation>
    <scope>FUNCTION</scope>
</reference>
<reference key="13">
    <citation type="journal article" date="2011" name="Org. Biomol. Chem.">
        <title>New insights into ergot alkaloid biosynthesis in Claviceps purpurea: an agroclavine synthase EasG catalyses, via a non-enzymatic adduct with reduced glutathione, the conversion of chanoclavine-I aldehyde to agroclavine.</title>
        <authorList>
            <person name="Matuschek M."/>
            <person name="Wallwey C."/>
            <person name="Xie X."/>
            <person name="Li S.M."/>
        </authorList>
    </citation>
    <scope>FUNCTION</scope>
</reference>
<reference key="14">
    <citation type="journal article" date="2014" name="Chem. Biol.">
        <title>Cyclolization of D-lysergic acid alkaloid peptides.</title>
        <authorList>
            <person name="Havemann J."/>
            <person name="Vogel D."/>
            <person name="Loll B."/>
            <person name="Keller U."/>
        </authorList>
    </citation>
    <scope>FUNCTION</scope>
</reference>
<keyword id="KW-0285">Flavoprotein</keyword>
<keyword id="KW-0288">FMN</keyword>
<accession>Q6ZXC1</accession>
<accession>E9L2U7</accession>
<organism>
    <name type="scientific">Claviceps purpurea</name>
    <name type="common">Ergot fungus</name>
    <name type="synonym">Sphacelia segetum</name>
    <dbReference type="NCBI Taxonomy" id="5111"/>
    <lineage>
        <taxon>Eukaryota</taxon>
        <taxon>Fungi</taxon>
        <taxon>Dikarya</taxon>
        <taxon>Ascomycota</taxon>
        <taxon>Pezizomycotina</taxon>
        <taxon>Sordariomycetes</taxon>
        <taxon>Hypocreomycetidae</taxon>
        <taxon>Hypocreales</taxon>
        <taxon>Clavicipitaceae</taxon>
        <taxon>Claviceps</taxon>
    </lineage>
</organism>
<name>EASA_CLAPU</name>
<protein>
    <recommendedName>
        <fullName evidence="16">Probable inactive dehydrogenase easA</fullName>
    </recommendedName>
    <alternativeName>
        <fullName evidence="16">Ergot alkaloid biosynthesis protein A</fullName>
    </alternativeName>
</protein>
<evidence type="ECO:0000250" key="1">
    <source>
        <dbReference type="UniProtKB" id="Q02899"/>
    </source>
</evidence>
<evidence type="ECO:0000250" key="2">
    <source>
        <dbReference type="UniProtKB" id="Q4WZ70"/>
    </source>
</evidence>
<evidence type="ECO:0000250" key="3">
    <source>
        <dbReference type="UniProtKB" id="Q50EL0"/>
    </source>
</evidence>
<evidence type="ECO:0000269" key="4">
    <source>
    </source>
</evidence>
<evidence type="ECO:0000269" key="5">
    <source>
    </source>
</evidence>
<evidence type="ECO:0000269" key="6">
    <source>
    </source>
</evidence>
<evidence type="ECO:0000269" key="7">
    <source>
    </source>
</evidence>
<evidence type="ECO:0000269" key="8">
    <source>
    </source>
</evidence>
<evidence type="ECO:0000269" key="9">
    <source>
    </source>
</evidence>
<evidence type="ECO:0000269" key="10">
    <source>
    </source>
</evidence>
<evidence type="ECO:0000269" key="11">
    <source>
    </source>
</evidence>
<evidence type="ECO:0000269" key="12">
    <source>
    </source>
</evidence>
<evidence type="ECO:0000269" key="13">
    <source>
    </source>
</evidence>
<evidence type="ECO:0000269" key="14">
    <source>
    </source>
</evidence>
<evidence type="ECO:0000303" key="15">
    <source>
    </source>
</evidence>
<evidence type="ECO:0000303" key="16">
    <source>
    </source>
</evidence>
<evidence type="ECO:0000305" key="17"/>
<evidence type="ECO:0000305" key="18">
    <source>
    </source>
</evidence>
<evidence type="ECO:0000305" key="19">
    <source>
    </source>
</evidence>